<sequence>MEDNSVLNEDSNLEHVEGQPRRSMSQPVLNVEGDKRTSSTSATQQQVLSGAFSSADVRSIPIIQTWEENKALKTKITILRGELQMYQRRYSEAKEASQKRVKEVMDDYVDLKLGQENVQEKMEQYKLMEEDLLAMQSRIETSEDNFARQMKEFEAQKHAMEERIKELELSATDANNTTVGSFRGTLDDILKKNDPDFTLTSGYEERKINDLEAKLLSEIDKVAELEDHIQQLRQELDDQSARLADSENVRAQLEAATGQGILGAAGNAMVPNSTFMIGNGRESQTRDQLNYIDDLETKLADAKKENDKARQALVEYMNKCSKLEHEIRTMVKNSTFDSSSMLLGGQTSDELKIQIGKVNGELNVLRAENRELRIRCDQLTGGDGNLSISLGQSRLMAGIATNDVDSIGQGNETGGTSMRILPRESQLDDLEESKLPLMDTSSAVRNQQQFASMWEDFESVKDSLQNNHNDTLEGSFNSSMPPPGRDATQSFLSQKSFKNSPIVMQKPKSLHLHLKSHQSEGAGEQIQNNSFSTKTASPHVSQSHIPILHDMQQILDSSAMFLEGQHDVAVNVEQMQEKMSQIREALARLFERLKSSAALFEEILERMGSSDPNADKIKKMKLAFETSINDKLNVSAILEAAEKDLHNMSLNFSILEKSIVSQAAEASRRFTIAPDAEDVASSSLLNASYSPLFKFTSNSDIVEKLQNEVSELKNELEMARTRDMRSPLNGSSGRLSDVQINTNRMFEDLEVSEATLQKAKEENSTLKSQFAELEANLHQVNSKLGEVRCELNEALARVDGEQETRVKAENALEEARQLISSLKHEENELKKTITDMGMRLNEAKKSDEFLKSELSTALEEEKKSQNLADELSEELNGWRMRTKEAENKVEHASSEKSEMLERIVHLETEMEKLSTSEIAADYCSTKMTERKKEIELAKYREDFENAAIVGLERISKEISELTKKTLKAKIIPSNISSIQLVCDELCRRLSREREQQHEYAKVMRDVNEKIEKLQLEKDALEHELKMMSSNNENVPPVGTSVSGMPTKTSNQKCAQPHYTSPTRQLLHESTMAVDAIVQKLKKTHNMSGMGPELKETIGNVINESRVLRDFLHQKLILFKGIDMSNWKNETVDQLITDLGQLHQDNLMLEEQIKKYKKELKLTKSAIPTLGVEFQDRIKTEIGKIATDMGGAVKEIRKK</sequence>
<dbReference type="EMBL" id="FO080752">
    <property type="protein sequence ID" value="CCD66432.1"/>
    <property type="molecule type" value="Genomic_DNA"/>
</dbReference>
<dbReference type="PIR" id="T29145">
    <property type="entry name" value="T29145"/>
</dbReference>
<dbReference type="RefSeq" id="NP_491539.1">
    <property type="nucleotide sequence ID" value="NM_059138.6"/>
</dbReference>
<dbReference type="SMR" id="P91349"/>
<dbReference type="BioGRID" id="37615">
    <property type="interactions" value="141"/>
</dbReference>
<dbReference type="ComplexPortal" id="CPX-1357">
    <property type="entry name" value="RSA centrosome-targeting complex"/>
</dbReference>
<dbReference type="DIP" id="DIP-24727N"/>
<dbReference type="FunCoup" id="P91349">
    <property type="interactions" value="252"/>
</dbReference>
<dbReference type="IntAct" id="P91349">
    <property type="interactions" value="10"/>
</dbReference>
<dbReference type="STRING" id="6239.F56A3.4.1"/>
<dbReference type="iPTMnet" id="P91349"/>
<dbReference type="PaxDb" id="6239-F56A3.4"/>
<dbReference type="PeptideAtlas" id="P91349"/>
<dbReference type="EnsemblMetazoa" id="F56A3.4.1">
    <property type="protein sequence ID" value="F56A3.4.1"/>
    <property type="gene ID" value="WBGene00004955"/>
</dbReference>
<dbReference type="EnsemblMetazoa" id="F56A3.4.2">
    <property type="protein sequence ID" value="F56A3.4.2"/>
    <property type="gene ID" value="WBGene00004955"/>
</dbReference>
<dbReference type="GeneID" id="172155"/>
<dbReference type="KEGG" id="cel:CELE_F56A3.4"/>
<dbReference type="UCSC" id="F56A3.4">
    <property type="organism name" value="c. elegans"/>
</dbReference>
<dbReference type="AGR" id="WB:WBGene00004955"/>
<dbReference type="CTD" id="172155"/>
<dbReference type="WormBase" id="F56A3.4">
    <property type="protein sequence ID" value="CE28834"/>
    <property type="gene ID" value="WBGene00004955"/>
    <property type="gene designation" value="spd-5"/>
</dbReference>
<dbReference type="eggNOG" id="ENOG502RVPP">
    <property type="taxonomic scope" value="Eukaryota"/>
</dbReference>
<dbReference type="HOGENOM" id="CLU_269384_0_0_1"/>
<dbReference type="InParanoid" id="P91349"/>
<dbReference type="OMA" id="ENENKHC"/>
<dbReference type="OrthoDB" id="5801533at2759"/>
<dbReference type="PhylomeDB" id="P91349"/>
<dbReference type="SignaLink" id="P91349"/>
<dbReference type="CD-CODE" id="1E117272">
    <property type="entry name" value="Centrosome"/>
</dbReference>
<dbReference type="CD-CODE" id="240400BD">
    <property type="entry name" value="Synthetic Condensate 000102"/>
</dbReference>
<dbReference type="CD-CODE" id="2839F8E0">
    <property type="entry name" value="Synthetic Condensate 000108"/>
</dbReference>
<dbReference type="CD-CODE" id="49499F59">
    <property type="entry name" value="Synthetic Condensate 000132"/>
</dbReference>
<dbReference type="CD-CODE" id="5A404BB6">
    <property type="entry name" value="Synthetic Condensate 000106"/>
</dbReference>
<dbReference type="CD-CODE" id="73A75392">
    <property type="entry name" value="P-granule"/>
</dbReference>
<dbReference type="CD-CODE" id="D9713D2F">
    <property type="entry name" value="Synthetic Condensate 000103"/>
</dbReference>
<dbReference type="CD-CODE" id="DCE83E39">
    <property type="entry name" value="Synthetic Condensate 000127"/>
</dbReference>
<dbReference type="CD-CODE" id="E72E7219">
    <property type="entry name" value="Pericentriolar matrix"/>
</dbReference>
<dbReference type="PRO" id="PR:P91349"/>
<dbReference type="Proteomes" id="UP000001940">
    <property type="component" value="Chromosome I"/>
</dbReference>
<dbReference type="Bgee" id="WBGene00004955">
    <property type="expression patterns" value="Expressed in adult organism and 4 other cell types or tissues"/>
</dbReference>
<dbReference type="GO" id="GO:0005813">
    <property type="term" value="C:centrosome"/>
    <property type="evidence" value="ECO:0000314"/>
    <property type="project" value="UniProtKB"/>
</dbReference>
<dbReference type="GO" id="GO:0005737">
    <property type="term" value="C:cytoplasm"/>
    <property type="evidence" value="ECO:0000314"/>
    <property type="project" value="UniProtKB"/>
</dbReference>
<dbReference type="GO" id="GO:0000159">
    <property type="term" value="C:protein phosphatase type 2A complex"/>
    <property type="evidence" value="ECO:0000314"/>
    <property type="project" value="ComplexPortal"/>
</dbReference>
<dbReference type="GO" id="GO:0042802">
    <property type="term" value="F:identical protein binding"/>
    <property type="evidence" value="ECO:0000353"/>
    <property type="project" value="IntAct"/>
</dbReference>
<dbReference type="GO" id="GO:0140693">
    <property type="term" value="F:molecular condensate scaffold activity"/>
    <property type="evidence" value="ECO:0000314"/>
    <property type="project" value="WormBase"/>
</dbReference>
<dbReference type="GO" id="GO:0007098">
    <property type="term" value="P:centrosome cycle"/>
    <property type="evidence" value="ECO:0000315"/>
    <property type="project" value="WormBase"/>
</dbReference>
<dbReference type="GO" id="GO:0007052">
    <property type="term" value="P:mitotic spindle organization"/>
    <property type="evidence" value="ECO:0000315"/>
    <property type="project" value="ComplexPortal"/>
</dbReference>
<dbReference type="GO" id="GO:0045977">
    <property type="term" value="P:positive regulation of mitotic cell cycle, embryonic"/>
    <property type="evidence" value="ECO:0000315"/>
    <property type="project" value="UniProtKB"/>
</dbReference>
<dbReference type="GO" id="GO:0008104">
    <property type="term" value="P:protein localization"/>
    <property type="evidence" value="ECO:0000315"/>
    <property type="project" value="UniProtKB"/>
</dbReference>
<dbReference type="GO" id="GO:0033365">
    <property type="term" value="P:protein localization to organelle"/>
    <property type="evidence" value="ECO:0000315"/>
    <property type="project" value="WormBase"/>
</dbReference>
<dbReference type="PANTHER" id="PTHR18861">
    <property type="entry name" value="ELKS/RAB6-INTERACTING/CAST PROTEIN"/>
    <property type="match status" value="1"/>
</dbReference>
<dbReference type="PANTHER" id="PTHR18861:SF4">
    <property type="entry name" value="SPINDLE-DEFECTIVE PROTEIN 5"/>
    <property type="match status" value="1"/>
</dbReference>
<gene>
    <name type="primary">spd-5</name>
    <name type="ORF">F56A3.4</name>
</gene>
<comment type="function">
    <text evidence="3">Plays a central role in centrosome maturation and mitotic spindle assembly during the first division of the zygote. Required for the centrosomal localization of air-1 and zyg-9. Probably not required in late embryogenesis and during larval development.</text>
</comment>
<comment type="interaction">
    <interactant intactId="EBI-322479">
        <id>P91349</id>
    </interactant>
    <interactant intactId="EBI-315211">
        <id>P34331</id>
        <label>plk-1</label>
    </interactant>
    <organismsDiffer>false</organismsDiffer>
    <experiments>3</experiments>
</comment>
<comment type="interaction">
    <interactant intactId="EBI-322479">
        <id>P91349</id>
    </interactant>
    <interactant intactId="EBI-320962">
        <id>P91870</id>
        <label>spd-2</label>
    </interactant>
    <organismsDiffer>false</organismsDiffer>
    <experiments>3</experiments>
</comment>
<comment type="interaction">
    <interactant intactId="EBI-322479">
        <id>P91349</id>
    </interactant>
    <interactant intactId="EBI-322479">
        <id>P91349</id>
        <label>spd-5</label>
    </interactant>
    <organismsDiffer>false</organismsDiffer>
    <experiments>4</experiments>
</comment>
<comment type="subcellular location">
    <subcellularLocation>
        <location evidence="3 4">Cytoplasm</location>
        <location evidence="3 4">Cytoskeleton</location>
        <location evidence="3 4">Microtubule organizing center</location>
        <location evidence="3 4">Centrosome</location>
    </subcellularLocation>
    <text evidence="3 4">Component of the centrosome. First expressed at two different foci in early postmeiotic one-cell stage embryos, prior to pronuclear migration but after the sperm-donated centriole duplication. These two foci greatly increase in size prior to and during mitosis. In metaphase, it is localized throughout centrosomes. In late anaphase or telophase, it surrounds a central core devoid of microtubules. Its localization is independent of microtubules and other centrosomal proteins (PubMed:12431374). Recruitment to the centrosome during prophase of the 1-cell embryo is regulated by the cye-1/cdk-2 complex (PubMed:17115027).</text>
</comment>
<comment type="developmental stage">
    <text evidence="3">Expressed throughout embryogenesis and during postembryonic meiotic divisions that produce sperm in males.</text>
</comment>
<proteinExistence type="evidence at protein level"/>
<protein>
    <recommendedName>
        <fullName>Spindle-defective protein 5</fullName>
    </recommendedName>
</protein>
<name>SPD5_CAEEL</name>
<organism>
    <name type="scientific">Caenorhabditis elegans</name>
    <dbReference type="NCBI Taxonomy" id="6239"/>
    <lineage>
        <taxon>Eukaryota</taxon>
        <taxon>Metazoa</taxon>
        <taxon>Ecdysozoa</taxon>
        <taxon>Nematoda</taxon>
        <taxon>Chromadorea</taxon>
        <taxon>Rhabditida</taxon>
        <taxon>Rhabditina</taxon>
        <taxon>Rhabditomorpha</taxon>
        <taxon>Rhabditoidea</taxon>
        <taxon>Rhabditidae</taxon>
        <taxon>Peloderinae</taxon>
        <taxon>Caenorhabditis</taxon>
    </lineage>
</organism>
<keyword id="KW-0131">Cell cycle</keyword>
<keyword id="KW-0175">Coiled coil</keyword>
<keyword id="KW-0963">Cytoplasm</keyword>
<keyword id="KW-0206">Cytoskeleton</keyword>
<keyword id="KW-0217">Developmental protein</keyword>
<keyword id="KW-1185">Reference proteome</keyword>
<reference key="1">
    <citation type="journal article" date="2002" name="Dev. Cell">
        <title>Centrosome maturation and mitotic spindle assembly in C. elegans require SPD-5, a protein with multiple coiled-coil domains.</title>
        <authorList>
            <person name="Hamill D.R."/>
            <person name="Severson A.F."/>
            <person name="Carter J.C."/>
            <person name="Bowerman B."/>
        </authorList>
    </citation>
    <scope>NUCLEOTIDE SEQUENCE [GENOMIC DNA]</scope>
    <scope>FUNCTION</scope>
    <scope>SUBCELLULAR LOCATION</scope>
    <scope>DEVELOPMENTAL STAGE</scope>
    <scope>MUTAGENESIS OF ARG-592</scope>
    <source>
        <strain>Bristol N2</strain>
    </source>
</reference>
<reference key="2">
    <citation type="journal article" date="1998" name="Science">
        <title>Genome sequence of the nematode C. elegans: a platform for investigating biology.</title>
        <authorList>
            <consortium name="The C. elegans sequencing consortium"/>
        </authorList>
    </citation>
    <scope>NUCLEOTIDE SEQUENCE [LARGE SCALE GENOMIC DNA]</scope>
    <source>
        <strain>Bristol N2</strain>
    </source>
</reference>
<reference key="3">
    <citation type="journal article" date="2006" name="Nat. Cell Biol.">
        <title>Cyclin E-Cdk2 temporally regulates centrosome assembly and establishment of polarity in Caenorhabditis elegans embryos.</title>
        <authorList>
            <person name="Cowan C.R."/>
            <person name="Hyman A.A."/>
        </authorList>
    </citation>
    <scope>SUBCELLULAR LOCATION</scope>
</reference>
<feature type="chain" id="PRO_0000072113" description="Spindle-defective protein 5">
    <location>
        <begin position="1"/>
        <end position="1198"/>
    </location>
</feature>
<feature type="region of interest" description="Disordered" evidence="2">
    <location>
        <begin position="1"/>
        <end position="45"/>
    </location>
</feature>
<feature type="coiled-coil region" evidence="1">
    <location>
        <begin position="67"/>
        <end position="381"/>
    </location>
</feature>
<feature type="coiled-coil region" evidence="1">
    <location>
        <begin position="566"/>
        <end position="603"/>
    </location>
</feature>
<feature type="coiled-coil region" evidence="1">
    <location>
        <begin position="694"/>
        <end position="916"/>
    </location>
</feature>
<feature type="coiled-coil region" evidence="1">
    <location>
        <begin position="983"/>
        <end position="1035"/>
    </location>
</feature>
<feature type="coiled-coil region" evidence="1">
    <location>
        <begin position="1127"/>
        <end position="1175"/>
    </location>
</feature>
<feature type="compositionally biased region" description="Polar residues" evidence="2">
    <location>
        <begin position="1"/>
        <end position="10"/>
    </location>
</feature>
<feature type="mutagenesis site" description="In OR213ts; induces defective centrosomes at restrictive temperature when homozygous." evidence="3">
    <original>R</original>
    <variation>K</variation>
    <location>
        <position position="592"/>
    </location>
</feature>
<accession>P91349</accession>
<evidence type="ECO:0000255" key="1"/>
<evidence type="ECO:0000256" key="2">
    <source>
        <dbReference type="SAM" id="MobiDB-lite"/>
    </source>
</evidence>
<evidence type="ECO:0000269" key="3">
    <source>
    </source>
</evidence>
<evidence type="ECO:0000269" key="4">
    <source>
    </source>
</evidence>